<accession>Q94ID2</accession>
<accession>Q94IC9</accession>
<sequence>MKPCMTALRQVIQPLSLNFQGNMVDVPFFRRKDKVVFVMGATGTGKSRLAIDLATRFPAEIVNSDKIQVYKGLDIVTNKVTPEESLGVPHHLLGTVHDTYEDFTAEDFQREAIRAVESIVQRDRVPIIAGGSNSYIEALVNDCVDFRLRYNCCFLWVDVSRPVLHSFVSERVDKMVDMGLVDEVRRIFDPSSSDYSAGIRRAIGVPELDEFLRSEMRNYPAETTERLLETAIEKIKENTCLLACRQLQKIQRLYKQWKWNMHRVDATEVFLRRGEEADEAWDNSVAHPSALAVEKFLSYSDDHHLEGANILLPEISAVPPLPAAVAAISR</sequence>
<protein>
    <recommendedName>
        <fullName>Adenylate isopentenyltransferase 5, chloroplastic</fullName>
        <shortName>AtIPT5</shortName>
        <ecNumber>2.5.1.112</ecNumber>
    </recommendedName>
    <alternativeName>
        <fullName>Adenylate dimethylallyltransferase 5</fullName>
    </alternativeName>
    <alternativeName>
        <fullName>Cytokinin synthase 5</fullName>
    </alternativeName>
</protein>
<name>IPT5_ARATH</name>
<dbReference type="EC" id="2.5.1.112"/>
<dbReference type="EMBL" id="AB062608">
    <property type="protein sequence ID" value="BAB59041.1"/>
    <property type="molecule type" value="mRNA"/>
</dbReference>
<dbReference type="EMBL" id="AB061403">
    <property type="protein sequence ID" value="BAB59032.1"/>
    <property type="molecule type" value="mRNA"/>
</dbReference>
<dbReference type="EMBL" id="AC068809">
    <property type="status" value="NOT_ANNOTATED_CDS"/>
    <property type="molecule type" value="Genomic_DNA"/>
</dbReference>
<dbReference type="EMBL" id="CP002688">
    <property type="protein sequence ID" value="AED92645.1"/>
    <property type="molecule type" value="Genomic_DNA"/>
</dbReference>
<dbReference type="EMBL" id="CP002688">
    <property type="protein sequence ID" value="ANM70556.1"/>
    <property type="molecule type" value="Genomic_DNA"/>
</dbReference>
<dbReference type="EMBL" id="CP002688">
    <property type="protein sequence ID" value="ANM70557.1"/>
    <property type="molecule type" value="Genomic_DNA"/>
</dbReference>
<dbReference type="RefSeq" id="NP_001318596.1">
    <property type="nucleotide sequence ID" value="NM_001343584.1"/>
</dbReference>
<dbReference type="RefSeq" id="NP_001332154.1">
    <property type="nucleotide sequence ID" value="NM_001343585.1"/>
</dbReference>
<dbReference type="RefSeq" id="NP_197405.1">
    <property type="nucleotide sequence ID" value="NM_121909.2"/>
</dbReference>
<dbReference type="SMR" id="Q94ID2"/>
<dbReference type="STRING" id="3702.Q94ID2"/>
<dbReference type="PaxDb" id="3702-AT5G19040.1"/>
<dbReference type="EnsemblPlants" id="AT5G19040.1">
    <property type="protein sequence ID" value="AT5G19040.1"/>
    <property type="gene ID" value="AT5G19040"/>
</dbReference>
<dbReference type="EnsemblPlants" id="AT5G19040.2">
    <property type="protein sequence ID" value="AT5G19040.2"/>
    <property type="gene ID" value="AT5G19040"/>
</dbReference>
<dbReference type="EnsemblPlants" id="AT5G19040.3">
    <property type="protein sequence ID" value="AT5G19040.3"/>
    <property type="gene ID" value="AT5G19040"/>
</dbReference>
<dbReference type="GeneID" id="832023"/>
<dbReference type="Gramene" id="AT5G19040.1">
    <property type="protein sequence ID" value="AT5G19040.1"/>
    <property type="gene ID" value="AT5G19040"/>
</dbReference>
<dbReference type="Gramene" id="AT5G19040.2">
    <property type="protein sequence ID" value="AT5G19040.2"/>
    <property type="gene ID" value="AT5G19040"/>
</dbReference>
<dbReference type="Gramene" id="AT5G19040.3">
    <property type="protein sequence ID" value="AT5G19040.3"/>
    <property type="gene ID" value="AT5G19040"/>
</dbReference>
<dbReference type="KEGG" id="ath:AT5G19040"/>
<dbReference type="Araport" id="AT5G19040"/>
<dbReference type="TAIR" id="AT5G19040">
    <property type="gene designation" value="IPT5"/>
</dbReference>
<dbReference type="eggNOG" id="KOG1384">
    <property type="taxonomic scope" value="Eukaryota"/>
</dbReference>
<dbReference type="HOGENOM" id="CLU_032616_4_1_1"/>
<dbReference type="InParanoid" id="Q94ID2"/>
<dbReference type="OMA" id="NMHRVDA"/>
<dbReference type="BioCyc" id="MetaCyc:AT5G19040-MONOMER"/>
<dbReference type="BRENDA" id="2.5.1.112">
    <property type="organism ID" value="399"/>
</dbReference>
<dbReference type="PRO" id="PR:Q94ID2"/>
<dbReference type="Proteomes" id="UP000006548">
    <property type="component" value="Chromosome 5"/>
</dbReference>
<dbReference type="ExpressionAtlas" id="Q94ID2">
    <property type="expression patterns" value="baseline and differential"/>
</dbReference>
<dbReference type="GO" id="GO:0009507">
    <property type="term" value="C:chloroplast"/>
    <property type="evidence" value="ECO:0007669"/>
    <property type="project" value="UniProtKB-SubCell"/>
</dbReference>
<dbReference type="GO" id="GO:0009536">
    <property type="term" value="C:plastid"/>
    <property type="evidence" value="ECO:0000314"/>
    <property type="project" value="UniProtKB"/>
</dbReference>
<dbReference type="GO" id="GO:0009824">
    <property type="term" value="F:AMP dimethylallyltransferase activity"/>
    <property type="evidence" value="ECO:0000315"/>
    <property type="project" value="TAIR"/>
</dbReference>
<dbReference type="GO" id="GO:0005524">
    <property type="term" value="F:ATP binding"/>
    <property type="evidence" value="ECO:0007669"/>
    <property type="project" value="UniProtKB-KW"/>
</dbReference>
<dbReference type="GO" id="GO:0052622">
    <property type="term" value="F:ATP/ADP dimethylallyltransferase activity"/>
    <property type="evidence" value="ECO:0000250"/>
    <property type="project" value="TAIR"/>
</dbReference>
<dbReference type="GO" id="GO:0052381">
    <property type="term" value="F:tRNA dimethylallyltransferase activity"/>
    <property type="evidence" value="ECO:0007669"/>
    <property type="project" value="InterPro"/>
</dbReference>
<dbReference type="GO" id="GO:0009691">
    <property type="term" value="P:cytokinin biosynthetic process"/>
    <property type="evidence" value="ECO:0007669"/>
    <property type="project" value="UniProtKB-KW"/>
</dbReference>
<dbReference type="GO" id="GO:0008033">
    <property type="term" value="P:tRNA processing"/>
    <property type="evidence" value="ECO:0007669"/>
    <property type="project" value="InterPro"/>
</dbReference>
<dbReference type="FunFam" id="1.10.287.890:FF:000002">
    <property type="entry name" value="Adenylate isopentenyltransferase 5, chloroplastic"/>
    <property type="match status" value="1"/>
</dbReference>
<dbReference type="FunFam" id="3.40.50.300:FF:000816">
    <property type="entry name" value="Adenylate isopentenyltransferase 5, chloroplastic"/>
    <property type="match status" value="1"/>
</dbReference>
<dbReference type="Gene3D" id="1.10.287.890">
    <property type="entry name" value="Crystal structure of tRNA isopentenylpyrophosphate transferase (bh2366) domain"/>
    <property type="match status" value="1"/>
</dbReference>
<dbReference type="Gene3D" id="3.40.50.300">
    <property type="entry name" value="P-loop containing nucleotide triphosphate hydrolases"/>
    <property type="match status" value="1"/>
</dbReference>
<dbReference type="HAMAP" id="MF_00185">
    <property type="entry name" value="IPP_trans"/>
    <property type="match status" value="1"/>
</dbReference>
<dbReference type="InterPro" id="IPR039657">
    <property type="entry name" value="Dimethylallyltransferase"/>
</dbReference>
<dbReference type="InterPro" id="IPR018022">
    <property type="entry name" value="IPT"/>
</dbReference>
<dbReference type="InterPro" id="IPR027417">
    <property type="entry name" value="P-loop_NTPase"/>
</dbReference>
<dbReference type="PANTHER" id="PTHR11088:SF74">
    <property type="entry name" value="ADENYLATE ISOPENTENYLTRANSFERASE 5, CHLOROPLASTIC"/>
    <property type="match status" value="1"/>
</dbReference>
<dbReference type="PANTHER" id="PTHR11088">
    <property type="entry name" value="TRNA DIMETHYLALLYLTRANSFERASE"/>
    <property type="match status" value="1"/>
</dbReference>
<dbReference type="Pfam" id="PF01715">
    <property type="entry name" value="IPPT"/>
    <property type="match status" value="2"/>
</dbReference>
<dbReference type="SUPFAM" id="SSF52540">
    <property type="entry name" value="P-loop containing nucleoside triphosphate hydrolases"/>
    <property type="match status" value="1"/>
</dbReference>
<evidence type="ECO:0000255" key="1"/>
<evidence type="ECO:0000269" key="2">
    <source>
    </source>
</evidence>
<evidence type="ECO:0000269" key="3">
    <source>
    </source>
</evidence>
<evidence type="ECO:0000269" key="4">
    <source>
    </source>
</evidence>
<evidence type="ECO:0000269" key="5">
    <source>
    </source>
</evidence>
<evidence type="ECO:0000269" key="6">
    <source>
    </source>
</evidence>
<evidence type="ECO:0000269" key="7">
    <source>
    </source>
</evidence>
<evidence type="ECO:0000269" key="8">
    <source>
    </source>
</evidence>
<evidence type="ECO:0000305" key="9"/>
<proteinExistence type="evidence at protein level"/>
<gene>
    <name type="primary">IPT5</name>
    <name type="ordered locus">At5g19040</name>
    <name type="ORF">T16G12.80</name>
</gene>
<comment type="function">
    <text evidence="2 7 8">Involved in cytokinin biosynthesis. Catalyzes the transfer of an isopentenyl group from dimethylallyl diphosphate (DMAPP) to ATP and ADP.</text>
</comment>
<comment type="catalytic activity">
    <reaction evidence="3">
        <text>dimethylallyl diphosphate + ADP = N(6)-(dimethylallyl)adenosine 5'-diphosphate + diphosphate</text>
        <dbReference type="Rhea" id="RHEA:36327"/>
        <dbReference type="ChEBI" id="CHEBI:33019"/>
        <dbReference type="ChEBI" id="CHEBI:57623"/>
        <dbReference type="ChEBI" id="CHEBI:73533"/>
        <dbReference type="ChEBI" id="CHEBI:456216"/>
        <dbReference type="EC" id="2.5.1.112"/>
    </reaction>
</comment>
<comment type="catalytic activity">
    <reaction evidence="3">
        <text>dimethylallyl diphosphate + ATP = N(6)-(dimethylallyl)adenosine 5'-triphosphate + diphosphate</text>
        <dbReference type="Rhea" id="RHEA:36331"/>
        <dbReference type="ChEBI" id="CHEBI:30616"/>
        <dbReference type="ChEBI" id="CHEBI:33019"/>
        <dbReference type="ChEBI" id="CHEBI:57623"/>
        <dbReference type="ChEBI" id="CHEBI:73532"/>
        <dbReference type="EC" id="2.5.1.112"/>
    </reaction>
</comment>
<comment type="subcellular location">
    <subcellularLocation>
        <location evidence="5">Plastid</location>
        <location evidence="5">Chloroplast</location>
    </subcellularLocation>
</comment>
<comment type="tissue specificity">
    <text evidence="4 6">Expressed in root primordia, columella root caps, upper part of young inflorescences, and fruit abscission zones.</text>
</comment>
<comment type="developmental stage">
    <text evidence="4">Expressed in roots soon after germination, but decreases 7 days after germination.</text>
</comment>
<comment type="induction">
    <text evidence="4 6">Down-regulated by cytokinins and up-regulated by auxin. Not induced by nitrate.</text>
</comment>
<comment type="disruption phenotype">
    <text evidence="8">No visible phenotype, due the redundancy with other IPTs.</text>
</comment>
<comment type="similarity">
    <text evidence="9">Belongs to the IPP transferase family.</text>
</comment>
<reference key="1">
    <citation type="journal article" date="2001" name="J. Biol. Chem.">
        <title>Identification of genes encoding adenylate isopentenyltransferase, a cytokinin biosynthesis enzyme, in Arabidopsis thaliana.</title>
        <authorList>
            <person name="Takei K."/>
            <person name="Sakakibara H."/>
            <person name="Sugiyama T."/>
        </authorList>
    </citation>
    <scope>NUCLEOTIDE SEQUENCE [MRNA]</scope>
    <scope>FUNCTION</scope>
    <scope>GENE FAMILY</scope>
    <source>
        <strain>cv. Columbia</strain>
    </source>
</reference>
<reference key="2">
    <citation type="journal article" date="2001" name="Plant Cell Physiol.">
        <title>Identification of plant cytokinin biosynthetic enzymes as dimethylallyl diphosphate:ATP/ADP isopentenyltransferases.</title>
        <authorList>
            <person name="Kakimoto T."/>
        </authorList>
    </citation>
    <scope>NUCLEOTIDE SEQUENCE [MRNA]</scope>
    <scope>CATALYTIC ACTIVITY</scope>
    <scope>GENE FAMILY</scope>
    <source>
        <strain>cv. Wassilewskija</strain>
    </source>
</reference>
<reference key="3">
    <citation type="journal article" date="2000" name="Nature">
        <title>Sequence and analysis of chromosome 5 of the plant Arabidopsis thaliana.</title>
        <authorList>
            <person name="Tabata S."/>
            <person name="Kaneko T."/>
            <person name="Nakamura Y."/>
            <person name="Kotani H."/>
            <person name="Kato T."/>
            <person name="Asamizu E."/>
            <person name="Miyajima N."/>
            <person name="Sasamoto S."/>
            <person name="Kimura T."/>
            <person name="Hosouchi T."/>
            <person name="Kawashima K."/>
            <person name="Kohara M."/>
            <person name="Matsumoto M."/>
            <person name="Matsuno A."/>
            <person name="Muraki A."/>
            <person name="Nakayama S."/>
            <person name="Nakazaki N."/>
            <person name="Naruo K."/>
            <person name="Okumura S."/>
            <person name="Shinpo S."/>
            <person name="Takeuchi C."/>
            <person name="Wada T."/>
            <person name="Watanabe A."/>
            <person name="Yamada M."/>
            <person name="Yasuda M."/>
            <person name="Sato S."/>
            <person name="de la Bastide M."/>
            <person name="Huang E."/>
            <person name="Spiegel L."/>
            <person name="Gnoj L."/>
            <person name="O'Shaughnessy A."/>
            <person name="Preston R."/>
            <person name="Habermann K."/>
            <person name="Murray J."/>
            <person name="Johnson D."/>
            <person name="Rohlfing T."/>
            <person name="Nelson J."/>
            <person name="Stoneking T."/>
            <person name="Pepin K."/>
            <person name="Spieth J."/>
            <person name="Sekhon M."/>
            <person name="Armstrong J."/>
            <person name="Becker M."/>
            <person name="Belter E."/>
            <person name="Cordum H."/>
            <person name="Cordes M."/>
            <person name="Courtney L."/>
            <person name="Courtney W."/>
            <person name="Dante M."/>
            <person name="Du H."/>
            <person name="Edwards J."/>
            <person name="Fryman J."/>
            <person name="Haakensen B."/>
            <person name="Lamar E."/>
            <person name="Latreille P."/>
            <person name="Leonard S."/>
            <person name="Meyer R."/>
            <person name="Mulvaney E."/>
            <person name="Ozersky P."/>
            <person name="Riley A."/>
            <person name="Strowmatt C."/>
            <person name="Wagner-McPherson C."/>
            <person name="Wollam A."/>
            <person name="Yoakum M."/>
            <person name="Bell M."/>
            <person name="Dedhia N."/>
            <person name="Parnell L."/>
            <person name="Shah R."/>
            <person name="Rodriguez M."/>
            <person name="Hoon See L."/>
            <person name="Vil D."/>
            <person name="Baker J."/>
            <person name="Kirchoff K."/>
            <person name="Toth K."/>
            <person name="King L."/>
            <person name="Bahret A."/>
            <person name="Miller B."/>
            <person name="Marra M.A."/>
            <person name="Martienssen R."/>
            <person name="McCombie W.R."/>
            <person name="Wilson R.K."/>
            <person name="Murphy G."/>
            <person name="Bancroft I."/>
            <person name="Volckaert G."/>
            <person name="Wambutt R."/>
            <person name="Duesterhoeft A."/>
            <person name="Stiekema W."/>
            <person name="Pohl T."/>
            <person name="Entian K.-D."/>
            <person name="Terryn N."/>
            <person name="Hartley N."/>
            <person name="Bent E."/>
            <person name="Johnson S."/>
            <person name="Langham S.-A."/>
            <person name="McCullagh B."/>
            <person name="Robben J."/>
            <person name="Grymonprez B."/>
            <person name="Zimmermann W."/>
            <person name="Ramsperger U."/>
            <person name="Wedler H."/>
            <person name="Balke K."/>
            <person name="Wedler E."/>
            <person name="Peters S."/>
            <person name="van Staveren M."/>
            <person name="Dirkse W."/>
            <person name="Mooijman P."/>
            <person name="Klein Lankhorst R."/>
            <person name="Weitzenegger T."/>
            <person name="Bothe G."/>
            <person name="Rose M."/>
            <person name="Hauf J."/>
            <person name="Berneiser S."/>
            <person name="Hempel S."/>
            <person name="Feldpausch M."/>
            <person name="Lamberth S."/>
            <person name="Villarroel R."/>
            <person name="Gielen J."/>
            <person name="Ardiles W."/>
            <person name="Bents O."/>
            <person name="Lemcke K."/>
            <person name="Kolesov G."/>
            <person name="Mayer K.F.X."/>
            <person name="Rudd S."/>
            <person name="Schoof H."/>
            <person name="Schueller C."/>
            <person name="Zaccaria P."/>
            <person name="Mewes H.-W."/>
            <person name="Bevan M."/>
            <person name="Fransz P.F."/>
        </authorList>
    </citation>
    <scope>NUCLEOTIDE SEQUENCE [LARGE SCALE GENOMIC DNA]</scope>
    <source>
        <strain>cv. Columbia</strain>
    </source>
</reference>
<reference key="4">
    <citation type="journal article" date="2017" name="Plant J.">
        <title>Araport11: a complete reannotation of the Arabidopsis thaliana reference genome.</title>
        <authorList>
            <person name="Cheng C.Y."/>
            <person name="Krishnakumar V."/>
            <person name="Chan A.P."/>
            <person name="Thibaud-Nissen F."/>
            <person name="Schobel S."/>
            <person name="Town C.D."/>
        </authorList>
    </citation>
    <scope>GENOME REANNOTATION</scope>
    <source>
        <strain>cv. Columbia</strain>
    </source>
</reference>
<reference key="5">
    <citation type="journal article" date="2004" name="J. Biol. Chem.">
        <title>Distinct isoprenoid origins of cis- and trans-zeatin biosyntheses in Arabidopsis.</title>
        <authorList>
            <person name="Kasahara H."/>
            <person name="Takei K."/>
            <person name="Ueda N."/>
            <person name="Hishiyama S."/>
            <person name="Yamaya T."/>
            <person name="Kamiya Y."/>
            <person name="Yamaguchi S."/>
            <person name="Sakakibara H."/>
        </authorList>
    </citation>
    <scope>SUBCELLULAR LOCATION</scope>
</reference>
<reference key="6">
    <citation type="journal article" date="2004" name="Plant J.">
        <title>Expression of cytokinin biosynthetic isopentenyltransferase genes in Arabidopsis: tissue specificity and regulation by auxin, cytokinin, and nitrate.</title>
        <authorList>
            <person name="Miyawaki K."/>
            <person name="Matsumoto-Kitano M."/>
            <person name="Kakimoto T."/>
        </authorList>
    </citation>
    <scope>TISSUE SPECIFICITY</scope>
    <scope>DEVELOPMENTAL STAGE</scope>
    <scope>INDUCTION</scope>
</reference>
<reference key="7">
    <citation type="journal article" date="2004" name="Plant Cell Physiol.">
        <title>AtIPT3 is a key determinant of nitrate-dependent cytokinin biosynthesis in Arabidopsis.</title>
        <authorList>
            <person name="Takei K."/>
            <person name="Ueda N."/>
            <person name="Aoki K."/>
            <person name="Kuromori T."/>
            <person name="Hirayama T."/>
            <person name="Shinozaki K."/>
            <person name="Yamaya T."/>
            <person name="Sakakibara H."/>
        </authorList>
    </citation>
    <scope>TISSUE SPECIFICITY</scope>
    <scope>INDUCTION</scope>
</reference>
<reference key="8">
    <citation type="journal article" date="2005" name="Proc. Natl. Acad. Sci. U.S.A.">
        <title>Agrobacterium tumefaciens increases cytokinin production in plastids by modifying the biosynthetic pathway in the host plant.</title>
        <authorList>
            <person name="Sakakibara H."/>
            <person name="Kasahara H."/>
            <person name="Ueda N."/>
            <person name="Kojima M."/>
            <person name="Takei K."/>
            <person name="Hishiyama S."/>
            <person name="Asami T."/>
            <person name="Okada K."/>
            <person name="Kamiya Y."/>
            <person name="Yamaya T."/>
            <person name="Yamaguchi S."/>
        </authorList>
    </citation>
    <scope>FUNCTION</scope>
</reference>
<reference key="9">
    <citation type="journal article" date="2006" name="Proc. Natl. Acad. Sci. U.S.A.">
        <title>Roles of Arabidopsis ATP/ADP isopentenyltransferases and tRNA isopentenyltransferases in cytokinin biosynthesis.</title>
        <authorList>
            <person name="Miyawaki K."/>
            <person name="Tarkowski P."/>
            <person name="Matsumoto-Kitano M."/>
            <person name="Kato T."/>
            <person name="Sato S."/>
            <person name="Tarkowska D."/>
            <person name="Tabata S."/>
            <person name="Sandberg G."/>
            <person name="Kakimoto T."/>
        </authorList>
    </citation>
    <scope>FUNCTION</scope>
    <scope>DISRUPTION PHENOTYPE</scope>
</reference>
<keyword id="KW-0067">ATP-binding</keyword>
<keyword id="KW-0150">Chloroplast</keyword>
<keyword id="KW-0203">Cytokinin biosynthesis</keyword>
<keyword id="KW-0547">Nucleotide-binding</keyword>
<keyword id="KW-0934">Plastid</keyword>
<keyword id="KW-1185">Reference proteome</keyword>
<keyword id="KW-0808">Transferase</keyword>
<keyword id="KW-0809">Transit peptide</keyword>
<feature type="transit peptide" description="Chloroplast" evidence="1">
    <location>
        <begin position="1"/>
        <end position="39"/>
    </location>
</feature>
<feature type="chain" id="PRO_0000391073" description="Adenylate isopentenyltransferase 5, chloroplastic">
    <location>
        <begin position="40"/>
        <end position="330"/>
    </location>
</feature>
<feature type="binding site" evidence="1">
    <location>
        <begin position="40"/>
        <end position="47"/>
    </location>
    <ligand>
        <name>ATP</name>
        <dbReference type="ChEBI" id="CHEBI:30616"/>
    </ligand>
</feature>
<feature type="sequence conflict" description="In Ref. 2; BAB59032." evidence="9" ref="2">
    <original>D</original>
    <variation>E</variation>
    <location>
        <position position="177"/>
    </location>
</feature>
<organism>
    <name type="scientific">Arabidopsis thaliana</name>
    <name type="common">Mouse-ear cress</name>
    <dbReference type="NCBI Taxonomy" id="3702"/>
    <lineage>
        <taxon>Eukaryota</taxon>
        <taxon>Viridiplantae</taxon>
        <taxon>Streptophyta</taxon>
        <taxon>Embryophyta</taxon>
        <taxon>Tracheophyta</taxon>
        <taxon>Spermatophyta</taxon>
        <taxon>Magnoliopsida</taxon>
        <taxon>eudicotyledons</taxon>
        <taxon>Gunneridae</taxon>
        <taxon>Pentapetalae</taxon>
        <taxon>rosids</taxon>
        <taxon>malvids</taxon>
        <taxon>Brassicales</taxon>
        <taxon>Brassicaceae</taxon>
        <taxon>Camelineae</taxon>
        <taxon>Arabidopsis</taxon>
    </lineage>
</organism>